<feature type="signal peptide" evidence="4">
    <location>
        <begin position="1"/>
        <end position="31"/>
    </location>
</feature>
<feature type="chain" id="PRO_0000019238" description="Fibronectin">
    <location>
        <begin position="32"/>
        <end position="2481"/>
    </location>
</feature>
<feature type="domain" description="Fibronectin type-I 1" evidence="6">
    <location>
        <begin position="53"/>
        <end position="93"/>
    </location>
</feature>
<feature type="domain" description="Fibronectin type-I 2" evidence="6">
    <location>
        <begin position="98"/>
        <end position="141"/>
    </location>
</feature>
<feature type="domain" description="Fibronectin type-I 3" evidence="6">
    <location>
        <begin position="142"/>
        <end position="185"/>
    </location>
</feature>
<feature type="domain" description="Fibronectin type-I 4" evidence="6">
    <location>
        <begin position="187"/>
        <end position="231"/>
    </location>
</feature>
<feature type="domain" description="Fibronectin type-I 5" evidence="6">
    <location>
        <begin position="232"/>
        <end position="276"/>
    </location>
</feature>
<feature type="domain" description="Fibronectin type-I 6" evidence="6">
    <location>
        <begin position="307"/>
        <end position="346"/>
    </location>
</feature>
<feature type="domain" description="Fibronectin type-II 1" evidence="6 7">
    <location>
        <begin position="356"/>
        <end position="404"/>
    </location>
</feature>
<feature type="domain" description="Fibronectin type-II 2" evidence="6 7">
    <location>
        <begin position="416"/>
        <end position="464"/>
    </location>
</feature>
<feature type="domain" description="Fibronectin type-I 7" evidence="6">
    <location>
        <begin position="469"/>
        <end position="512"/>
    </location>
</feature>
<feature type="domain" description="Fibronectin type-I 8" evidence="6">
    <location>
        <begin position="517"/>
        <end position="559"/>
    </location>
</feature>
<feature type="domain" description="Fibronectin type-I 9" evidence="6">
    <location>
        <begin position="560"/>
        <end position="603"/>
    </location>
</feature>
<feature type="domain" description="Fibronectin type-III 1">
    <location>
        <begin position="611"/>
        <end position="703"/>
    </location>
</feature>
<feature type="domain" description="Fibronectin type-III 2" evidence="5 6 7">
    <location>
        <begin position="720"/>
        <end position="808"/>
    </location>
</feature>
<feature type="domain" description="Fibronectin type-III 3" evidence="5 6 7">
    <location>
        <begin position="811"/>
        <end position="904"/>
    </location>
</feature>
<feature type="domain" description="Fibronectin type-III 4" evidence="5 6 7">
    <location>
        <begin position="909"/>
        <end position="998"/>
    </location>
</feature>
<feature type="domain" description="Fibronectin type-III 5" evidence="5 6 7">
    <location>
        <begin position="999"/>
        <end position="1088"/>
    </location>
</feature>
<feature type="domain" description="Fibronectin type-III 6" evidence="5 6 7">
    <location>
        <begin position="1089"/>
        <end position="1175"/>
    </location>
</feature>
<feature type="domain" description="Fibronectin type-III 7" evidence="5 6 7">
    <location>
        <begin position="1176"/>
        <end position="1270"/>
    </location>
</feature>
<feature type="domain" description="Fibronectin type-III 8; extra domain B" evidence="5 6 7">
    <location>
        <begin position="1271"/>
        <end position="1359"/>
    </location>
</feature>
<feature type="domain" description="Fibronectin type-III 9" evidence="5 6 7">
    <location>
        <begin position="1360"/>
        <end position="1452"/>
    </location>
</feature>
<feature type="domain" description="Fibronectin type-III 10" evidence="5">
    <location>
        <begin position="1453"/>
        <end position="1540"/>
    </location>
</feature>
<feature type="domain" description="Fibronectin type-III 11" evidence="5">
    <location>
        <begin position="1541"/>
        <end position="1634"/>
    </location>
</feature>
<feature type="domain" description="Fibronectin type-III 12" evidence="5">
    <location>
        <begin position="1635"/>
        <end position="1726"/>
    </location>
</feature>
<feature type="domain" description="Fibronectin type-III 13; extra domain A" evidence="5 6 7">
    <location>
        <begin position="1727"/>
        <end position="1814"/>
    </location>
</feature>
<feature type="domain" description="Fibronectin type-III 14" evidence="5">
    <location>
        <begin position="1815"/>
        <end position="1908"/>
    </location>
</feature>
<feature type="domain" description="Fibronectin type-III 15" evidence="5">
    <location>
        <begin position="1909"/>
        <end position="1995"/>
    </location>
</feature>
<feature type="domain" description="Fibronectin type-III 16" evidence="5">
    <location>
        <begin position="1996"/>
        <end position="2086"/>
    </location>
</feature>
<feature type="domain" description="Fibronectin type-III 17" evidence="5">
    <location>
        <begin position="2195"/>
        <end position="2299"/>
    </location>
</feature>
<feature type="domain" description="Fibronectin type-I 10" evidence="6">
    <location>
        <begin position="2299"/>
        <end position="2343"/>
    </location>
</feature>
<feature type="domain" description="Fibronectin type-I 11" evidence="6">
    <location>
        <begin position="2344"/>
        <end position="2386"/>
    </location>
</feature>
<feature type="domain" description="Fibronectin type-I 12" evidence="6">
    <location>
        <begin position="2388"/>
        <end position="2431"/>
    </location>
</feature>
<feature type="DNA-binding region" evidence="1">
    <location>
        <begin position="907"/>
        <end position="1172"/>
    </location>
</feature>
<feature type="region of interest" description="Disordered" evidence="8">
    <location>
        <begin position="28"/>
        <end position="51"/>
    </location>
</feature>
<feature type="region of interest" description="Fibrin- and heparin-binding 1">
    <location>
        <begin position="55"/>
        <end position="275"/>
    </location>
</feature>
<feature type="region of interest" description="Collagen-binding">
    <location>
        <begin position="309"/>
        <end position="609"/>
    </location>
</feature>
<feature type="region of interest" description="Cell-attachment">
    <location>
        <begin position="1358"/>
        <end position="1631"/>
    </location>
</feature>
<feature type="region of interest" description="Heparin-binding 2">
    <location>
        <begin position="1812"/>
        <end position="2082"/>
    </location>
</feature>
<feature type="region of interest" description="V region (type III connecting segment, IIICS)">
    <location>
        <begin position="2083"/>
        <end position="2205"/>
    </location>
</feature>
<feature type="region of interest" description="Disordered" evidence="8">
    <location>
        <begin position="2111"/>
        <end position="2138"/>
    </location>
</feature>
<feature type="region of interest" description="Fibrin-binding 2">
    <location>
        <begin position="2301"/>
        <end position="2432"/>
    </location>
</feature>
<feature type="short sequence motif" description="Cell attachment site">
    <location>
        <begin position="1615"/>
        <end position="1617"/>
    </location>
</feature>
<feature type="compositionally biased region" description="Low complexity" evidence="8">
    <location>
        <begin position="33"/>
        <end position="48"/>
    </location>
</feature>
<feature type="compositionally biased region" description="Polar residues" evidence="8">
    <location>
        <begin position="2111"/>
        <end position="2135"/>
    </location>
</feature>
<feature type="glycosylation site" description="N-linked (GlcNAc...) asparagine" evidence="4">
    <location>
        <position position="431"/>
    </location>
</feature>
<feature type="glycosylation site" description="N-linked (GlcNAc...) asparagine" evidence="4">
    <location>
        <position position="529"/>
    </location>
</feature>
<feature type="glycosylation site" description="N-linked (GlcNAc...) asparagine" evidence="4">
    <location>
        <position position="543"/>
    </location>
</feature>
<feature type="glycosylation site" description="N-linked (GlcNAc...) asparagine" evidence="4">
    <location>
        <position position="877"/>
    </location>
</feature>
<feature type="glycosylation site" description="N-linked (GlcNAc...) asparagine" evidence="4">
    <location>
        <position position="1244"/>
    </location>
</feature>
<feature type="glycosylation site" description="N-linked (GlcNAc...) asparagine" evidence="4">
    <location>
        <position position="1291"/>
    </location>
</feature>
<feature type="glycosylation site" description="N-linked (GlcNAc...) asparagine" evidence="4">
    <location>
        <position position="2202"/>
    </location>
</feature>
<feature type="disulfide bond" evidence="1">
    <location>
        <begin position="55"/>
        <end position="81"/>
    </location>
</feature>
<feature type="disulfide bond" evidence="1">
    <location>
        <begin position="79"/>
        <end position="90"/>
    </location>
</feature>
<feature type="disulfide bond" evidence="1">
    <location>
        <begin position="100"/>
        <end position="128"/>
    </location>
</feature>
<feature type="disulfide bond" evidence="1">
    <location>
        <begin position="126"/>
        <end position="138"/>
    </location>
</feature>
<feature type="disulfide bond" evidence="1">
    <location>
        <begin position="144"/>
        <end position="172"/>
    </location>
</feature>
<feature type="disulfide bond" evidence="1">
    <location>
        <begin position="170"/>
        <end position="182"/>
    </location>
</feature>
<feature type="disulfide bond" evidence="1">
    <location>
        <begin position="189"/>
        <end position="218"/>
    </location>
</feature>
<feature type="disulfide bond" evidence="1">
    <location>
        <begin position="216"/>
        <end position="228"/>
    </location>
</feature>
<feature type="disulfide bond" evidence="1">
    <location>
        <begin position="234"/>
        <end position="263"/>
    </location>
</feature>
<feature type="disulfide bond" evidence="1">
    <location>
        <begin position="261"/>
        <end position="273"/>
    </location>
</feature>
<feature type="disulfide bond" evidence="1">
    <location>
        <begin position="309"/>
        <end position="336"/>
    </location>
</feature>
<feature type="disulfide bond" evidence="1">
    <location>
        <begin position="334"/>
        <end position="343"/>
    </location>
</feature>
<feature type="disulfide bond" evidence="1">
    <location>
        <begin position="361"/>
        <end position="387"/>
    </location>
</feature>
<feature type="disulfide bond" evidence="1">
    <location>
        <begin position="375"/>
        <end position="402"/>
    </location>
</feature>
<feature type="disulfide bond" evidence="1">
    <location>
        <begin position="421"/>
        <end position="447"/>
    </location>
</feature>
<feature type="disulfide bond" evidence="1">
    <location>
        <begin position="471"/>
        <end position="499"/>
    </location>
</feature>
<feature type="disulfide bond" evidence="1">
    <location>
        <begin position="497"/>
        <end position="509"/>
    </location>
</feature>
<feature type="disulfide bond" evidence="1">
    <location>
        <begin position="519"/>
        <end position="546"/>
    </location>
</feature>
<feature type="disulfide bond" evidence="1">
    <location>
        <begin position="544"/>
        <end position="556"/>
    </location>
</feature>
<feature type="disulfide bond" evidence="1">
    <location>
        <begin position="562"/>
        <end position="590"/>
    </location>
</feature>
<feature type="disulfide bond" evidence="1">
    <location>
        <begin position="588"/>
        <end position="600"/>
    </location>
</feature>
<feature type="disulfide bond" evidence="1">
    <location>
        <begin position="2301"/>
        <end position="2330"/>
    </location>
</feature>
<feature type="disulfide bond" evidence="1">
    <location>
        <begin position="2328"/>
        <end position="2340"/>
    </location>
</feature>
<feature type="disulfide bond" evidence="1">
    <location>
        <begin position="2346"/>
        <end position="2373"/>
    </location>
</feature>
<feature type="disulfide bond" evidence="1">
    <location>
        <begin position="2371"/>
        <end position="2383"/>
    </location>
</feature>
<feature type="disulfide bond" evidence="1">
    <location>
        <begin position="2390"/>
        <end position="2416"/>
    </location>
</feature>
<feature type="disulfide bond" evidence="1">
    <location>
        <begin position="2414"/>
        <end position="2425"/>
    </location>
</feature>
<feature type="disulfide bond" description="Interchain (with C-2463)" evidence="6 7">
    <location>
        <position position="2459"/>
    </location>
</feature>
<feature type="disulfide bond" description="Interchain (with C-2459)" evidence="6 7">
    <location>
        <position position="2463"/>
    </location>
</feature>
<proteinExistence type="evidence at transcript level"/>
<reference key="1">
    <citation type="journal article" date="1992" name="Dev. Biol.">
        <title>Identification and characterization of alternatively spliced fibronectin mRNAs expressed in early Xenopus embryos.</title>
        <authorList>
            <person name="Desimone D.W."/>
            <person name="Norton P.A."/>
            <person name="Hynes R.O."/>
        </authorList>
    </citation>
    <scope>NUCLEOTIDE SEQUENCE [MRNA]</scope>
</reference>
<organism>
    <name type="scientific">Xenopus laevis</name>
    <name type="common">African clawed frog</name>
    <dbReference type="NCBI Taxonomy" id="8355"/>
    <lineage>
        <taxon>Eukaryota</taxon>
        <taxon>Metazoa</taxon>
        <taxon>Chordata</taxon>
        <taxon>Craniata</taxon>
        <taxon>Vertebrata</taxon>
        <taxon>Euteleostomi</taxon>
        <taxon>Amphibia</taxon>
        <taxon>Batrachia</taxon>
        <taxon>Anura</taxon>
        <taxon>Pipoidea</taxon>
        <taxon>Pipidae</taxon>
        <taxon>Xenopodinae</taxon>
        <taxon>Xenopus</taxon>
        <taxon>Xenopus</taxon>
    </lineage>
</organism>
<keyword id="KW-0011">Acute phase</keyword>
<keyword id="KW-0025">Alternative splicing</keyword>
<keyword id="KW-0130">Cell adhesion</keyword>
<keyword id="KW-0133">Cell shape</keyword>
<keyword id="KW-1015">Disulfide bond</keyword>
<keyword id="KW-0325">Glycoprotein</keyword>
<keyword id="KW-0358">Heparin-binding</keyword>
<keyword id="KW-1185">Reference proteome</keyword>
<keyword id="KW-0677">Repeat</keyword>
<keyword id="KW-0732">Signal</keyword>
<evidence type="ECO:0000250" key="1"/>
<evidence type="ECO:0000250" key="2">
    <source>
        <dbReference type="UniProtKB" id="P02751"/>
    </source>
</evidence>
<evidence type="ECO:0000250" key="3">
    <source>
        <dbReference type="UniProtKB" id="P11276"/>
    </source>
</evidence>
<evidence type="ECO:0000255" key="4"/>
<evidence type="ECO:0000255" key="5">
    <source>
        <dbReference type="PROSITE-ProRule" id="PRU00316"/>
    </source>
</evidence>
<evidence type="ECO:0000255" key="6">
    <source>
        <dbReference type="PROSITE-ProRule" id="PRU00478"/>
    </source>
</evidence>
<evidence type="ECO:0000255" key="7">
    <source>
        <dbReference type="PROSITE-ProRule" id="PRU00479"/>
    </source>
</evidence>
<evidence type="ECO:0000256" key="8">
    <source>
        <dbReference type="SAM" id="MobiDB-lite"/>
    </source>
</evidence>
<evidence type="ECO:0000305" key="9"/>
<dbReference type="EMBL" id="M77820">
    <property type="protein sequence ID" value="AAA49707.1"/>
    <property type="molecule type" value="mRNA"/>
</dbReference>
<dbReference type="PIR" id="A43908">
    <property type="entry name" value="A43908"/>
</dbReference>
<dbReference type="SMR" id="Q91740"/>
<dbReference type="GlyCosmos" id="Q91740">
    <property type="glycosylation" value="7 sites, No reported glycans"/>
</dbReference>
<dbReference type="AGR" id="Xenbase:XB-GENE-865084"/>
<dbReference type="Xenbase" id="XB-GENE-865084">
    <property type="gene designation" value="fn1.S"/>
</dbReference>
<dbReference type="Proteomes" id="UP000186698">
    <property type="component" value="Unplaced"/>
</dbReference>
<dbReference type="GO" id="GO:0005615">
    <property type="term" value="C:extracellular space"/>
    <property type="evidence" value="ECO:0007669"/>
    <property type="project" value="UniProtKB-ARBA"/>
</dbReference>
<dbReference type="GO" id="GO:0005201">
    <property type="term" value="F:extracellular matrix structural constituent"/>
    <property type="evidence" value="ECO:0007669"/>
    <property type="project" value="TreeGrafter"/>
</dbReference>
<dbReference type="GO" id="GO:0008201">
    <property type="term" value="F:heparin binding"/>
    <property type="evidence" value="ECO:0007669"/>
    <property type="project" value="UniProtKB-KW"/>
</dbReference>
<dbReference type="GO" id="GO:0005178">
    <property type="term" value="F:integrin binding"/>
    <property type="evidence" value="ECO:0000318"/>
    <property type="project" value="GO_Central"/>
</dbReference>
<dbReference type="GO" id="GO:0043394">
    <property type="term" value="F:proteoglycan binding"/>
    <property type="evidence" value="ECO:0000318"/>
    <property type="project" value="GO_Central"/>
</dbReference>
<dbReference type="GO" id="GO:0006953">
    <property type="term" value="P:acute-phase response"/>
    <property type="evidence" value="ECO:0007669"/>
    <property type="project" value="UniProtKB-KW"/>
</dbReference>
<dbReference type="GO" id="GO:0007160">
    <property type="term" value="P:cell-matrix adhesion"/>
    <property type="evidence" value="ECO:0000318"/>
    <property type="project" value="GO_Central"/>
</dbReference>
<dbReference type="GO" id="GO:0007044">
    <property type="term" value="P:cell-substrate junction assembly"/>
    <property type="evidence" value="ECO:0000318"/>
    <property type="project" value="GO_Central"/>
</dbReference>
<dbReference type="GO" id="GO:0007507">
    <property type="term" value="P:heart development"/>
    <property type="evidence" value="ECO:0000318"/>
    <property type="project" value="GO_Central"/>
</dbReference>
<dbReference type="GO" id="GO:0007399">
    <property type="term" value="P:nervous system development"/>
    <property type="evidence" value="ECO:0000318"/>
    <property type="project" value="GO_Central"/>
</dbReference>
<dbReference type="GO" id="GO:0008360">
    <property type="term" value="P:regulation of cell shape"/>
    <property type="evidence" value="ECO:0007669"/>
    <property type="project" value="UniProtKB-KW"/>
</dbReference>
<dbReference type="CDD" id="cd00061">
    <property type="entry name" value="FN1"/>
    <property type="match status" value="12"/>
</dbReference>
<dbReference type="CDD" id="cd00062">
    <property type="entry name" value="FN2"/>
    <property type="match status" value="2"/>
</dbReference>
<dbReference type="CDD" id="cd00063">
    <property type="entry name" value="FN3"/>
    <property type="match status" value="16"/>
</dbReference>
<dbReference type="FunFam" id="2.10.70.10:FF:000004">
    <property type="entry name" value="Fibronectin 1"/>
    <property type="match status" value="1"/>
</dbReference>
<dbReference type="FunFam" id="2.10.70.10:FF:000006">
    <property type="entry name" value="Fibronectin 1"/>
    <property type="match status" value="3"/>
</dbReference>
<dbReference type="FunFam" id="2.10.70.10:FF:000007">
    <property type="entry name" value="Fibronectin 1"/>
    <property type="match status" value="2"/>
</dbReference>
<dbReference type="FunFam" id="2.10.70.10:FF:000018">
    <property type="entry name" value="Fibronectin 1"/>
    <property type="match status" value="1"/>
</dbReference>
<dbReference type="FunFam" id="2.60.40.10:FF:000099">
    <property type="entry name" value="Fibronectin 1"/>
    <property type="match status" value="4"/>
</dbReference>
<dbReference type="FunFam" id="2.60.40.10:FF:000417">
    <property type="entry name" value="Fibronectin 1"/>
    <property type="match status" value="1"/>
</dbReference>
<dbReference type="FunFam" id="2.10.10.10:FF:000001">
    <property type="entry name" value="Fibronectin 1a isoform 1"/>
    <property type="match status" value="2"/>
</dbReference>
<dbReference type="FunFam" id="2.60.40.10:FF:000227">
    <property type="entry name" value="Fibronectin isoform X1"/>
    <property type="match status" value="2"/>
</dbReference>
<dbReference type="FunFam" id="2.10.70.10:FF:000021">
    <property type="entry name" value="fibronectin isoform X1"/>
    <property type="match status" value="1"/>
</dbReference>
<dbReference type="FunFam" id="2.10.70.10:FF:000022">
    <property type="entry name" value="fibronectin isoform X1"/>
    <property type="match status" value="1"/>
</dbReference>
<dbReference type="FunFam" id="2.60.40.10:FF:000275">
    <property type="entry name" value="fibronectin isoform X1"/>
    <property type="match status" value="1"/>
</dbReference>
<dbReference type="FunFam" id="2.60.40.10:FF:000300">
    <property type="entry name" value="fibronectin isoform X1"/>
    <property type="match status" value="1"/>
</dbReference>
<dbReference type="FunFam" id="2.60.40.10:FF:000364">
    <property type="entry name" value="fibronectin isoform X1"/>
    <property type="match status" value="1"/>
</dbReference>
<dbReference type="FunFam" id="2.60.40.10:FF:000433">
    <property type="entry name" value="fibronectin isoform X5"/>
    <property type="match status" value="1"/>
</dbReference>
<dbReference type="Gene3D" id="2.10.70.10">
    <property type="entry name" value="Complement Module, domain 1"/>
    <property type="match status" value="12"/>
</dbReference>
<dbReference type="Gene3D" id="2.10.10.10">
    <property type="entry name" value="Fibronectin, type II, collagen-binding"/>
    <property type="match status" value="2"/>
</dbReference>
<dbReference type="Gene3D" id="2.60.40.10">
    <property type="entry name" value="Immunoglobulins"/>
    <property type="match status" value="17"/>
</dbReference>
<dbReference type="InterPro" id="IPR050991">
    <property type="entry name" value="ECM_Regulatory_Proteins"/>
</dbReference>
<dbReference type="InterPro" id="IPR000083">
    <property type="entry name" value="Fibronectin_type1"/>
</dbReference>
<dbReference type="InterPro" id="IPR003961">
    <property type="entry name" value="FN3_dom"/>
</dbReference>
<dbReference type="InterPro" id="IPR036116">
    <property type="entry name" value="FN3_sf"/>
</dbReference>
<dbReference type="InterPro" id="IPR000562">
    <property type="entry name" value="FN_type2_dom"/>
</dbReference>
<dbReference type="InterPro" id="IPR036943">
    <property type="entry name" value="FN_type2_sf"/>
</dbReference>
<dbReference type="InterPro" id="IPR013783">
    <property type="entry name" value="Ig-like_fold"/>
</dbReference>
<dbReference type="InterPro" id="IPR013806">
    <property type="entry name" value="Kringle-like"/>
</dbReference>
<dbReference type="PANTHER" id="PTHR46708:SF8">
    <property type="entry name" value="FIBRONECTIN"/>
    <property type="match status" value="1"/>
</dbReference>
<dbReference type="PANTHER" id="PTHR46708">
    <property type="entry name" value="TENASCIN"/>
    <property type="match status" value="1"/>
</dbReference>
<dbReference type="Pfam" id="PF00039">
    <property type="entry name" value="fn1"/>
    <property type="match status" value="11"/>
</dbReference>
<dbReference type="Pfam" id="PF00040">
    <property type="entry name" value="fn2"/>
    <property type="match status" value="2"/>
</dbReference>
<dbReference type="Pfam" id="PF00041">
    <property type="entry name" value="fn3"/>
    <property type="match status" value="17"/>
</dbReference>
<dbReference type="PRINTS" id="PR00013">
    <property type="entry name" value="FNTYPEII"/>
</dbReference>
<dbReference type="SMART" id="SM00058">
    <property type="entry name" value="FN1"/>
    <property type="match status" value="12"/>
</dbReference>
<dbReference type="SMART" id="SM00059">
    <property type="entry name" value="FN2"/>
    <property type="match status" value="2"/>
</dbReference>
<dbReference type="SMART" id="SM00060">
    <property type="entry name" value="FN3"/>
    <property type="match status" value="17"/>
</dbReference>
<dbReference type="SUPFAM" id="SSF49265">
    <property type="entry name" value="Fibronectin type III"/>
    <property type="match status" value="10"/>
</dbReference>
<dbReference type="SUPFAM" id="SSF57603">
    <property type="entry name" value="FnI-like domain"/>
    <property type="match status" value="12"/>
</dbReference>
<dbReference type="SUPFAM" id="SSF57440">
    <property type="entry name" value="Kringle-like"/>
    <property type="match status" value="2"/>
</dbReference>
<dbReference type="PROSITE" id="PS00022">
    <property type="entry name" value="EGF_1"/>
    <property type="match status" value="2"/>
</dbReference>
<dbReference type="PROSITE" id="PS01253">
    <property type="entry name" value="FN1_1"/>
    <property type="match status" value="11"/>
</dbReference>
<dbReference type="PROSITE" id="PS51091">
    <property type="entry name" value="FN1_2"/>
    <property type="match status" value="12"/>
</dbReference>
<dbReference type="PROSITE" id="PS51092">
    <property type="entry name" value="FN2_2"/>
    <property type="match status" value="2"/>
</dbReference>
<dbReference type="PROSITE" id="PS50853">
    <property type="entry name" value="FN3"/>
    <property type="match status" value="17"/>
</dbReference>
<gene>
    <name evidence="2" type="primary">fn1</name>
</gene>
<name>FINC_XENLA</name>
<protein>
    <recommendedName>
        <fullName evidence="2">Fibronectin</fullName>
        <shortName>FN</shortName>
    </recommendedName>
</protein>
<sequence>MRRGALTGLLLVLCLSVVLRAAPSATSKKRRQAQQQQQQQVVQPQGTQDNHQKGCYDNGKYYQINQQWERTYLGNTLVCTCYGGGRGFNCESKPESEETCFDKYTGVSYRVGETYERPKDNMIWDCTCIGAGRGRISCTIANRCHEGGQSYKIGDTWRRPHETGGYMLECVCLGNGKGEWTCKPVAERCYDNTAGTSYVVGQTWEKPYQGWMMVDCTCLGEGNGRITCSSKNRCNDQDTKTSYRIGDTWSKTDTRGNLLQCICTGNGRGEWKCERHSSAQATGTGSNPITNIQTALYQPDSQLEPYGHCVTDNGVLYSLGMRWLRTQGSKQMLCTCLGNGVSCEETVATITFGGNANGEPCAIPFTHDGKTYYSCTSEGRQDGKLWCATTSNYDSDKKYSFCTEQLALVQTRGGNSNGALCNFPFLYNNLNYTDSTSEGRQDSMKWCGTTANYDADQKFGFCPMAAHEEICTTNEGVMYRVGDQWDKQHDQGHMMRCTCVGNGRGEWSCVAYSQLKDQCIVDGLTYNVNSSFTKLHEEGHMMNCTCFGQGRGRWKCDAIDQCQDTETRQFYQIGDSWEKHLQGVQYQCYCYGKGIGEWHCQPLSTSQAGTGPVQVIITESANFPTSHPIQWNAPQASHIKNYILRWKPKLKAGPWKQATIPGHLNSYTISGLKPGILYEGQLISILQYGNREVTTFDFTTTTTIHRHSQTESGETTPLPPLVSISESVTEITASSFLVSWVSASDTVSGFRVEYELSEDGDEKRYLELPNTATSVNIPDLLPGRRYNVNVYQITEEGEKSLILSTTQTTAPDAPPEHNVENVDDTSIMIKWNKPQAPITGYRVVYSPSVEGSSTELNLPSTANSVTLTELLPGIEYNITIYAVEDSLESVPVFIQQGTTGTPQTVIVPSPTDLQLVEVTDVKIIIMWTSPQSEVSGYRVVVKPVSPAGRDVQNLPVNRNTFAEVVNLQPGRTYSFEVYAVNRGQESEPLVGEFATKLDAPTDLQFTDVTESTVVIIWIPPQAKIGRYLLSVGQTRGGQPSQFPINPSVTNHKLDNLLPGTEYTVSLVALKGNQQSASASGVFSTLEPVGSIPHYNTEVTETTIVVTWTPVPRIGFKLDVRPSQGGEAPREVISESGSIVISGLTPGVEYTYSISVLTDGVEKDIPITKTVVTPLSPPTNLRLQPSRDSATLTVYWDRSISPGITGYRISTTPTPMQVGNSLEEEVGPSQTYCVFENLSPGVEYNVSVYAVKEEEESAPLSQMFLQEIPQLTDIKYDDVTDTSIDLRWTPLNSSNIIGYRITVVAAGESVPIYEEFVGPTDGYYKVSGLEPGIDYEISLITLINGGESAPTTIIQHTAVPPPTNLRFTNIGPDNIRVTWSPPTSIELSSYLVRYSPVKKPDDVTELSLSPSTNMVVLSNLLPFTEYLVSVHSVYEERESSSLNGVAKTHLDSPTGIAFSEITPNSFTVHWIAPRGPITGYRIRYQLESGAGRPKEERVPPSRNSITLTHLIPGSEYLVSIIAINGQQESLPLAGQQATVSDVPTDLEVTSSSPNTLTISWEAPAVSVRYYRITYSQTGGHGPEKEFTVPGTSNTATIRGLNPGVSYTITVYAVTGRGDSPASSKPLTIIHKTDVDQPIDMAVTDIQDHSIHVKWSPPPGPVTGYRVTSVPKSGQGETFSQVISPDQTEVTIVGLQPAVEYVVSIYSQGENGESEPLVETAVTNIDNPKGLTFTDVGVDSIRLAWEVPDGQVTRYRVTYSSPEDGVKELFPAPEGDDDTAELHGLRPGTEYTVSIVALHDDMESKPLIGIQSTAIPAPTNLQFSQVTPSGFSLSWHAPTVHLTGYLVRVNPKEKTGPTKEVRLSPGVAATTVTGLMVATKYEVNVYALKDSLTSQPLQGLISTLDNVSPPRRPRIQDVTETTVTLSWRTKTETITGFQIDAIPADGQNPIRRTVDADLRTFTITGLQPGTDYKIYLYTLNDNARSSPVTVDVTTAVDSPSNLRFLTTTSNSLLFTWQPPRARITGYIIRYEKAGGLIKEHLPRLPAGTTESTLTNLEPGTEYIIYIIAVRNNMKSEPLVGRKRTDELPRLVTLPHPGQGPEILDVPTDEENTPHITQTKLDNGNGIQLPGSNGQQPSSDHEGQLIEEHGFRSPLAPTTAVPVRPGKFAPGRYPQERVDIELDTFPVQHGDFDGPYPHGLGPQLNDSGVQEVASHTTISWRPELETTEYIISCHPIDHEEAPLQFRVPGTSSSATLNGLTRGATYNIVVEAQKGTDKHKVLEKRVTVGSPGSPEGVLQPVEDTCYDTFSGAHYSVGQEWERMSESGFRLWCKCLGYGSGHFRCDSSKWCHDNGVNHRIGEKWDRRGENGQMMSCTCLGNGKGEFKCEPPEATCYDEGKMYNVGEQWQKEYLGAICSCTCYGGQQGWRCDNCRRPGAVSPDGTAGQTVSQFTQRYQQNYNLNCPIECYLPLGLQADTQHSQQTQK</sequence>
<comment type="function">
    <text evidence="2 3">Fibronectins bind cell surfaces and various compounds including collagen, fibrin, heparin, DNA, and actin. Fibronectins are involved in cell adhesion, cell motility, opsonization, wound healing, and maintenance of cell shape (By similarity). Involved in osteoblast compaction through the fibronectin fibrillogenesis cell-mediated matrix assembly process, essential for osteoblast mineralization. Participates in the regulation of type I collagen deposition by osteoblasts (By similarity).</text>
</comment>
<comment type="subunit">
    <text evidence="1">Dimers or multimers of alternatively spliced variants, connected by 2 disulfide bonds near the carboxyl ends.</text>
</comment>
<comment type="alternative products">
    <event type="alternative splicing"/>
    <isoform>
        <id>Q91740-1</id>
        <name>1</name>
        <sequence type="displayed"/>
    </isoform>
    <text evidence="9">A number of isoforms are produced. The diversity of isoforms depends on the V region and either of the two extra domain which can be either included or excluded (partially or completely for the V region).</text>
</comment>
<comment type="tissue specificity">
    <text>In early Xenopus embryo, cellular forms of fibronectin predominate which include both extra domains. In fibronectin of embryonic and adult liver the connecting strand 3 can be either completely excluded or included.</text>
</comment>
<comment type="PTM">
    <text evidence="3">Forms covalent cross-links mediated by a transglutaminase, such as F13A or TGM2, between a glutamine and the epsilon-amino group of a lysine residue, forming homopolymers and heteropolymers (e.g. fibrinogen-fibronectin, collagen-fibronectin heteropolymers).</text>
</comment>
<accession>Q91740</accession>